<gene>
    <name type="primary">Plac8</name>
</gene>
<keyword id="KW-1185">Reference proteome</keyword>
<organism>
    <name type="scientific">Mus musculus</name>
    <name type="common">Mouse</name>
    <dbReference type="NCBI Taxonomy" id="10090"/>
    <lineage>
        <taxon>Eukaryota</taxon>
        <taxon>Metazoa</taxon>
        <taxon>Chordata</taxon>
        <taxon>Craniata</taxon>
        <taxon>Vertebrata</taxon>
        <taxon>Euteleostomi</taxon>
        <taxon>Mammalia</taxon>
        <taxon>Eutheria</taxon>
        <taxon>Euarchontoglires</taxon>
        <taxon>Glires</taxon>
        <taxon>Rodentia</taxon>
        <taxon>Myomorpha</taxon>
        <taxon>Muroidea</taxon>
        <taxon>Muridae</taxon>
        <taxon>Murinae</taxon>
        <taxon>Mus</taxon>
        <taxon>Mus</taxon>
    </lineage>
</organism>
<sequence length="112" mass="12353">MAQAPTVIVTQPGFVRAPQNSNWQTSLCDCFSDCGVCLCGTFCFTCLGCQVAADMNECCLCGTTVAMRTLYRTRYGIPGSICDDYMVTLFCPVCSVCQLKRDINRRRAMNAF</sequence>
<name>PLAC8_MOUSE</name>
<evidence type="ECO:0000305" key="1"/>
<feature type="chain" id="PRO_0000186093" description="Placenta-specific gene 8 protein">
    <location>
        <begin position="1"/>
        <end position="112"/>
    </location>
</feature>
<protein>
    <recommendedName>
        <fullName>Placenta-specific gene 8 protein</fullName>
    </recommendedName>
    <alternativeName>
        <fullName>Onzin</fullName>
    </alternativeName>
    <alternativeName>
        <fullName>Protein C15</fullName>
    </alternativeName>
</protein>
<proteinExistence type="evidence at protein level"/>
<comment type="similarity">
    <text evidence="1">Belongs to the cornifelin family.</text>
</comment>
<reference key="1">
    <citation type="submission" date="2000-05" db="EMBL/GenBank/DDBJ databases">
        <title>Identification of LIF regulated genes in the mouse uterus.</title>
        <authorList>
            <person name="Sherwin J.R.A."/>
            <person name="Sharkey A.M."/>
            <person name="Smith S.K."/>
        </authorList>
    </citation>
    <scope>NUCLEOTIDE SEQUENCE [MRNA]</scope>
</reference>
<reference key="2">
    <citation type="journal article" date="2002" name="Blood">
        <title>Subtractive hybridization reveals the expression of immunoglobulin like transcript 7, Eph-B1, granzyme B, and 3 novel transcripts in human plasmacytoid dendritic cells.</title>
        <authorList>
            <person name="Rissoan M.-C."/>
            <person name="Duhen T."/>
            <person name="Bridon J.-M."/>
            <person name="Bendriss-Vermare N."/>
            <person name="Peronne C."/>
            <person name="de Saint-Vis B.M."/>
            <person name="Briere F."/>
            <person name="Bates E.E.M."/>
        </authorList>
    </citation>
    <scope>NUCLEOTIDE SEQUENCE [MRNA]</scope>
</reference>
<reference key="3">
    <citation type="journal article" date="2005" name="Science">
        <title>The transcriptional landscape of the mammalian genome.</title>
        <authorList>
            <person name="Carninci P."/>
            <person name="Kasukawa T."/>
            <person name="Katayama S."/>
            <person name="Gough J."/>
            <person name="Frith M.C."/>
            <person name="Maeda N."/>
            <person name="Oyama R."/>
            <person name="Ravasi T."/>
            <person name="Lenhard B."/>
            <person name="Wells C."/>
            <person name="Kodzius R."/>
            <person name="Shimokawa K."/>
            <person name="Bajic V.B."/>
            <person name="Brenner S.E."/>
            <person name="Batalov S."/>
            <person name="Forrest A.R."/>
            <person name="Zavolan M."/>
            <person name="Davis M.J."/>
            <person name="Wilming L.G."/>
            <person name="Aidinis V."/>
            <person name="Allen J.E."/>
            <person name="Ambesi-Impiombato A."/>
            <person name="Apweiler R."/>
            <person name="Aturaliya R.N."/>
            <person name="Bailey T.L."/>
            <person name="Bansal M."/>
            <person name="Baxter L."/>
            <person name="Beisel K.W."/>
            <person name="Bersano T."/>
            <person name="Bono H."/>
            <person name="Chalk A.M."/>
            <person name="Chiu K.P."/>
            <person name="Choudhary V."/>
            <person name="Christoffels A."/>
            <person name="Clutterbuck D.R."/>
            <person name="Crowe M.L."/>
            <person name="Dalla E."/>
            <person name="Dalrymple B.P."/>
            <person name="de Bono B."/>
            <person name="Della Gatta G."/>
            <person name="di Bernardo D."/>
            <person name="Down T."/>
            <person name="Engstrom P."/>
            <person name="Fagiolini M."/>
            <person name="Faulkner G."/>
            <person name="Fletcher C.F."/>
            <person name="Fukushima T."/>
            <person name="Furuno M."/>
            <person name="Futaki S."/>
            <person name="Gariboldi M."/>
            <person name="Georgii-Hemming P."/>
            <person name="Gingeras T.R."/>
            <person name="Gojobori T."/>
            <person name="Green R.E."/>
            <person name="Gustincich S."/>
            <person name="Harbers M."/>
            <person name="Hayashi Y."/>
            <person name="Hensch T.K."/>
            <person name="Hirokawa N."/>
            <person name="Hill D."/>
            <person name="Huminiecki L."/>
            <person name="Iacono M."/>
            <person name="Ikeo K."/>
            <person name="Iwama A."/>
            <person name="Ishikawa T."/>
            <person name="Jakt M."/>
            <person name="Kanapin A."/>
            <person name="Katoh M."/>
            <person name="Kawasawa Y."/>
            <person name="Kelso J."/>
            <person name="Kitamura H."/>
            <person name="Kitano H."/>
            <person name="Kollias G."/>
            <person name="Krishnan S.P."/>
            <person name="Kruger A."/>
            <person name="Kummerfeld S.K."/>
            <person name="Kurochkin I.V."/>
            <person name="Lareau L.F."/>
            <person name="Lazarevic D."/>
            <person name="Lipovich L."/>
            <person name="Liu J."/>
            <person name="Liuni S."/>
            <person name="McWilliam S."/>
            <person name="Madan Babu M."/>
            <person name="Madera M."/>
            <person name="Marchionni L."/>
            <person name="Matsuda H."/>
            <person name="Matsuzawa S."/>
            <person name="Miki H."/>
            <person name="Mignone F."/>
            <person name="Miyake S."/>
            <person name="Morris K."/>
            <person name="Mottagui-Tabar S."/>
            <person name="Mulder N."/>
            <person name="Nakano N."/>
            <person name="Nakauchi H."/>
            <person name="Ng P."/>
            <person name="Nilsson R."/>
            <person name="Nishiguchi S."/>
            <person name="Nishikawa S."/>
            <person name="Nori F."/>
            <person name="Ohara O."/>
            <person name="Okazaki Y."/>
            <person name="Orlando V."/>
            <person name="Pang K.C."/>
            <person name="Pavan W.J."/>
            <person name="Pavesi G."/>
            <person name="Pesole G."/>
            <person name="Petrovsky N."/>
            <person name="Piazza S."/>
            <person name="Reed J."/>
            <person name="Reid J.F."/>
            <person name="Ring B.Z."/>
            <person name="Ringwald M."/>
            <person name="Rost B."/>
            <person name="Ruan Y."/>
            <person name="Salzberg S.L."/>
            <person name="Sandelin A."/>
            <person name="Schneider C."/>
            <person name="Schoenbach C."/>
            <person name="Sekiguchi K."/>
            <person name="Semple C.A."/>
            <person name="Seno S."/>
            <person name="Sessa L."/>
            <person name="Sheng Y."/>
            <person name="Shibata Y."/>
            <person name="Shimada H."/>
            <person name="Shimada K."/>
            <person name="Silva D."/>
            <person name="Sinclair B."/>
            <person name="Sperling S."/>
            <person name="Stupka E."/>
            <person name="Sugiura K."/>
            <person name="Sultana R."/>
            <person name="Takenaka Y."/>
            <person name="Taki K."/>
            <person name="Tammoja K."/>
            <person name="Tan S.L."/>
            <person name="Tang S."/>
            <person name="Taylor M.S."/>
            <person name="Tegner J."/>
            <person name="Teichmann S.A."/>
            <person name="Ueda H.R."/>
            <person name="van Nimwegen E."/>
            <person name="Verardo R."/>
            <person name="Wei C.L."/>
            <person name="Yagi K."/>
            <person name="Yamanishi H."/>
            <person name="Zabarovsky E."/>
            <person name="Zhu S."/>
            <person name="Zimmer A."/>
            <person name="Hide W."/>
            <person name="Bult C."/>
            <person name="Grimmond S.M."/>
            <person name="Teasdale R.D."/>
            <person name="Liu E.T."/>
            <person name="Brusic V."/>
            <person name="Quackenbush J."/>
            <person name="Wahlestedt C."/>
            <person name="Mattick J.S."/>
            <person name="Hume D.A."/>
            <person name="Kai C."/>
            <person name="Sasaki D."/>
            <person name="Tomaru Y."/>
            <person name="Fukuda S."/>
            <person name="Kanamori-Katayama M."/>
            <person name="Suzuki M."/>
            <person name="Aoki J."/>
            <person name="Arakawa T."/>
            <person name="Iida J."/>
            <person name="Imamura K."/>
            <person name="Itoh M."/>
            <person name="Kato T."/>
            <person name="Kawaji H."/>
            <person name="Kawagashira N."/>
            <person name="Kawashima T."/>
            <person name="Kojima M."/>
            <person name="Kondo S."/>
            <person name="Konno H."/>
            <person name="Nakano K."/>
            <person name="Ninomiya N."/>
            <person name="Nishio T."/>
            <person name="Okada M."/>
            <person name="Plessy C."/>
            <person name="Shibata K."/>
            <person name="Shiraki T."/>
            <person name="Suzuki S."/>
            <person name="Tagami M."/>
            <person name="Waki K."/>
            <person name="Watahiki A."/>
            <person name="Okamura-Oho Y."/>
            <person name="Suzuki H."/>
            <person name="Kawai J."/>
            <person name="Hayashizaki Y."/>
        </authorList>
    </citation>
    <scope>NUCLEOTIDE SEQUENCE [LARGE SCALE MRNA]</scope>
    <source>
        <strain>C57BL/6J</strain>
        <tissue>Pancreas</tissue>
    </source>
</reference>
<reference key="4">
    <citation type="journal article" date="2004" name="Genome Res.">
        <title>The status, quality, and expansion of the NIH full-length cDNA project: the Mammalian Gene Collection (MGC).</title>
        <authorList>
            <consortium name="The MGC Project Team"/>
        </authorList>
    </citation>
    <scope>NUCLEOTIDE SEQUENCE [LARGE SCALE MRNA]</scope>
    <source>
        <tissue>Colon</tissue>
    </source>
</reference>
<reference key="5">
    <citation type="journal article" date="2010" name="Cell">
        <title>A tissue-specific atlas of mouse protein phosphorylation and expression.</title>
        <authorList>
            <person name="Huttlin E.L."/>
            <person name="Jedrychowski M.P."/>
            <person name="Elias J.E."/>
            <person name="Goswami T."/>
            <person name="Rad R."/>
            <person name="Beausoleil S.A."/>
            <person name="Villen J."/>
            <person name="Haas W."/>
            <person name="Sowa M.E."/>
            <person name="Gygi S.P."/>
        </authorList>
    </citation>
    <scope>IDENTIFICATION BY MASS SPECTROMETRY [LARGE SCALE ANALYSIS]</scope>
    <source>
        <tissue>Kidney</tissue>
        <tissue>Liver</tissue>
        <tissue>Lung</tissue>
        <tissue>Spleen</tissue>
    </source>
</reference>
<accession>Q9JI48</accession>
<dbReference type="EMBL" id="AF263458">
    <property type="protein sequence ID" value="AAF76887.1"/>
    <property type="molecule type" value="mRNA"/>
</dbReference>
<dbReference type="EMBL" id="AJ422151">
    <property type="protein sequence ID" value="CAD19534.1"/>
    <property type="molecule type" value="mRNA"/>
</dbReference>
<dbReference type="EMBL" id="AK007369">
    <property type="protein sequence ID" value="BAB24991.1"/>
    <property type="molecule type" value="mRNA"/>
</dbReference>
<dbReference type="EMBL" id="BC010789">
    <property type="protein sequence ID" value="AAH10789.1"/>
    <property type="molecule type" value="mRNA"/>
</dbReference>
<dbReference type="CCDS" id="CCDS19464.1"/>
<dbReference type="RefSeq" id="NP_001357683.1">
    <property type="nucleotide sequence ID" value="NM_001370754.1"/>
</dbReference>
<dbReference type="RefSeq" id="NP_631937.1">
    <property type="nucleotide sequence ID" value="NM_139198.3"/>
</dbReference>
<dbReference type="RefSeq" id="XP_011247732.1">
    <property type="nucleotide sequence ID" value="XM_011249430.1"/>
</dbReference>
<dbReference type="BioGRID" id="231130">
    <property type="interactions" value="1"/>
</dbReference>
<dbReference type="FunCoup" id="Q9JI48">
    <property type="interactions" value="637"/>
</dbReference>
<dbReference type="IntAct" id="Q9JI48">
    <property type="interactions" value="1"/>
</dbReference>
<dbReference type="STRING" id="10090.ENSMUSP00000108531"/>
<dbReference type="PhosphoSitePlus" id="Q9JI48"/>
<dbReference type="jPOST" id="Q9JI48"/>
<dbReference type="PaxDb" id="10090-ENSMUSP00000031264"/>
<dbReference type="ProteomicsDB" id="289668"/>
<dbReference type="Antibodypedia" id="52449">
    <property type="antibodies" value="63 antibodies from 17 providers"/>
</dbReference>
<dbReference type="DNASU" id="231507"/>
<dbReference type="Ensembl" id="ENSMUST00000031264.12">
    <property type="protein sequence ID" value="ENSMUSP00000031264.6"/>
    <property type="gene ID" value="ENSMUSG00000029322.13"/>
</dbReference>
<dbReference type="Ensembl" id="ENSMUST00000097437.9">
    <property type="protein sequence ID" value="ENSMUSP00000108533.2"/>
    <property type="gene ID" value="ENSMUSG00000029322.13"/>
</dbReference>
<dbReference type="Ensembl" id="ENSMUST00000112910.2">
    <property type="protein sequence ID" value="ENSMUSP00000108531.2"/>
    <property type="gene ID" value="ENSMUSG00000029322.13"/>
</dbReference>
<dbReference type="GeneID" id="231507"/>
<dbReference type="KEGG" id="mmu:231507"/>
<dbReference type="UCSC" id="uc008yht.1">
    <property type="organism name" value="mouse"/>
</dbReference>
<dbReference type="AGR" id="MGI:2445289"/>
<dbReference type="CTD" id="51316"/>
<dbReference type="MGI" id="MGI:2445289">
    <property type="gene designation" value="Plac8"/>
</dbReference>
<dbReference type="VEuPathDB" id="HostDB:ENSMUSG00000029322"/>
<dbReference type="eggNOG" id="ENOG502S3TI">
    <property type="taxonomic scope" value="Eukaryota"/>
</dbReference>
<dbReference type="GeneTree" id="ENSGT00940000157329"/>
<dbReference type="HOGENOM" id="CLU_083147_5_3_1"/>
<dbReference type="InParanoid" id="Q9JI48"/>
<dbReference type="OMA" id="FYCLGCQ"/>
<dbReference type="OrthoDB" id="1045822at2759"/>
<dbReference type="PhylomeDB" id="Q9JI48"/>
<dbReference type="TreeFam" id="TF330308"/>
<dbReference type="Reactome" id="R-MMU-6798695">
    <property type="pathway name" value="Neutrophil degranulation"/>
</dbReference>
<dbReference type="BioGRID-ORCS" id="231507">
    <property type="hits" value="1 hit in 77 CRISPR screens"/>
</dbReference>
<dbReference type="ChiTaRS" id="Plac8">
    <property type="organism name" value="mouse"/>
</dbReference>
<dbReference type="PRO" id="PR:Q9JI48"/>
<dbReference type="Proteomes" id="UP000000589">
    <property type="component" value="Chromosome 5"/>
</dbReference>
<dbReference type="RNAct" id="Q9JI48">
    <property type="molecule type" value="protein"/>
</dbReference>
<dbReference type="Bgee" id="ENSMUSG00000029322">
    <property type="expression patterns" value="Expressed in gastrula and 182 other cell types or tissues"/>
</dbReference>
<dbReference type="GO" id="GO:0005654">
    <property type="term" value="C:nucleoplasm"/>
    <property type="evidence" value="ECO:0000304"/>
    <property type="project" value="Reactome"/>
</dbReference>
<dbReference type="GO" id="GO:0005634">
    <property type="term" value="C:nucleus"/>
    <property type="evidence" value="ECO:0000305"/>
    <property type="project" value="MGI"/>
</dbReference>
<dbReference type="GO" id="GO:0003682">
    <property type="term" value="F:chromatin binding"/>
    <property type="evidence" value="ECO:0000314"/>
    <property type="project" value="MGI"/>
</dbReference>
<dbReference type="GO" id="GO:0050873">
    <property type="term" value="P:brown fat cell differentiation"/>
    <property type="evidence" value="ECO:0000315"/>
    <property type="project" value="MGI"/>
</dbReference>
<dbReference type="GO" id="GO:0042742">
    <property type="term" value="P:defense response to bacterium"/>
    <property type="evidence" value="ECO:0000315"/>
    <property type="project" value="MGI"/>
</dbReference>
<dbReference type="GO" id="GO:0043066">
    <property type="term" value="P:negative regulation of apoptotic process"/>
    <property type="evidence" value="ECO:0000314"/>
    <property type="project" value="MGI"/>
</dbReference>
<dbReference type="GO" id="GO:0040015">
    <property type="term" value="P:negative regulation of multicellular organism growth"/>
    <property type="evidence" value="ECO:0000315"/>
    <property type="project" value="MGI"/>
</dbReference>
<dbReference type="GO" id="GO:0008284">
    <property type="term" value="P:positive regulation of cell population proliferation"/>
    <property type="evidence" value="ECO:0000314"/>
    <property type="project" value="MGI"/>
</dbReference>
<dbReference type="GO" id="GO:0120162">
    <property type="term" value="P:positive regulation of cold-induced thermogenesis"/>
    <property type="evidence" value="ECO:0000315"/>
    <property type="project" value="YuBioLab"/>
</dbReference>
<dbReference type="GO" id="GO:0045944">
    <property type="term" value="P:positive regulation of transcription by RNA polymerase II"/>
    <property type="evidence" value="ECO:0000314"/>
    <property type="project" value="MGI"/>
</dbReference>
<dbReference type="GO" id="GO:0009409">
    <property type="term" value="P:response to cold"/>
    <property type="evidence" value="ECO:0000315"/>
    <property type="project" value="MGI"/>
</dbReference>
<dbReference type="GO" id="GO:0006366">
    <property type="term" value="P:transcription by RNA polymerase II"/>
    <property type="evidence" value="ECO:0000314"/>
    <property type="project" value="MGI"/>
</dbReference>
<dbReference type="InterPro" id="IPR006461">
    <property type="entry name" value="PLAC_motif_containing"/>
</dbReference>
<dbReference type="NCBIfam" id="TIGR01571">
    <property type="entry name" value="A_thal_Cys_rich"/>
    <property type="match status" value="1"/>
</dbReference>
<dbReference type="PANTHER" id="PTHR15907">
    <property type="entry name" value="DUF614 FAMILY PROTEIN-RELATED"/>
    <property type="match status" value="1"/>
</dbReference>
<dbReference type="Pfam" id="PF04749">
    <property type="entry name" value="PLAC8"/>
    <property type="match status" value="1"/>
</dbReference>